<evidence type="ECO:0000250" key="1"/>
<evidence type="ECO:0000255" key="2"/>
<evidence type="ECO:0000305" key="3"/>
<sequence length="253" mass="28874">MKFCIIGYPVSHSISPRLYNEYFKRAGMNHSYGMEEIPPESFDTEIRRILEEYDGFNATIPHKERVMRYVEPSEDAQRIKAVNCVFRGKGYNTDWVGVVKSLEGVEVKEPVVVVGAGGAARAVIYALLQMGVKDIWVVNRTIERAKALDFPVKIFSLDQLDEVVKKAKSLFNTTSVGMKGEKLTVSEASLKGLYLVYDVVYFETPLVSDAKRLGVEHVVKGNLMFYYQAMENLKIWGIYDERSFKEVFEEVLR</sequence>
<reference key="1">
    <citation type="journal article" date="2011" name="J. Bacteriol.">
        <title>Genome sequence of Thermotoga sp. strain RQ2, a hyperthermophilic bacterium isolated from a geothermally heated region of the seafloor near Ribeira Quente, the Azores.</title>
        <authorList>
            <person name="Swithers K.S."/>
            <person name="DiPippo J.L."/>
            <person name="Bruce D.C."/>
            <person name="Detter C."/>
            <person name="Tapia R."/>
            <person name="Han S."/>
            <person name="Saunders E."/>
            <person name="Goodwin L.A."/>
            <person name="Han J."/>
            <person name="Woyke T."/>
            <person name="Pitluck S."/>
            <person name="Pennacchio L."/>
            <person name="Nolan M."/>
            <person name="Mikhailova N."/>
            <person name="Lykidis A."/>
            <person name="Land M.L."/>
            <person name="Brettin T."/>
            <person name="Stetter K.O."/>
            <person name="Nelson K.E."/>
            <person name="Gogarten J.P."/>
            <person name="Noll K.M."/>
        </authorList>
    </citation>
    <scope>NUCLEOTIDE SEQUENCE [LARGE SCALE GENOMIC DNA]</scope>
    <source>
        <strain>RQ2</strain>
    </source>
</reference>
<keyword id="KW-0028">Amino-acid biosynthesis</keyword>
<keyword id="KW-0057">Aromatic amino acid biosynthesis</keyword>
<keyword id="KW-0521">NADP</keyword>
<keyword id="KW-0560">Oxidoreductase</keyword>
<proteinExistence type="inferred from homology"/>
<protein>
    <recommendedName>
        <fullName>Shikimate dehydrogenase</fullName>
        <ecNumber>1.1.1.25</ecNumber>
    </recommendedName>
</protein>
<gene>
    <name type="primary">aroE</name>
    <name type="ordered locus">TRQ2_0589</name>
</gene>
<accession>B1L9E4</accession>
<comment type="catalytic activity">
    <reaction>
        <text>shikimate + NADP(+) = 3-dehydroshikimate + NADPH + H(+)</text>
        <dbReference type="Rhea" id="RHEA:17737"/>
        <dbReference type="ChEBI" id="CHEBI:15378"/>
        <dbReference type="ChEBI" id="CHEBI:16630"/>
        <dbReference type="ChEBI" id="CHEBI:36208"/>
        <dbReference type="ChEBI" id="CHEBI:57783"/>
        <dbReference type="ChEBI" id="CHEBI:58349"/>
        <dbReference type="EC" id="1.1.1.25"/>
    </reaction>
</comment>
<comment type="pathway">
    <text>Metabolic intermediate biosynthesis; chorismate biosynthesis; chorismate from D-erythrose 4-phosphate and phosphoenolpyruvate: step 4/7.</text>
</comment>
<comment type="similarity">
    <text evidence="3">Belongs to the shikimate dehydrogenase family.</text>
</comment>
<organism>
    <name type="scientific">Thermotoga sp. (strain RQ2)</name>
    <dbReference type="NCBI Taxonomy" id="126740"/>
    <lineage>
        <taxon>Bacteria</taxon>
        <taxon>Thermotogati</taxon>
        <taxon>Thermotogota</taxon>
        <taxon>Thermotogae</taxon>
        <taxon>Thermotogales</taxon>
        <taxon>Thermotogaceae</taxon>
        <taxon>Thermotoga</taxon>
    </lineage>
</organism>
<feature type="chain" id="PRO_1000100149" description="Shikimate dehydrogenase">
    <location>
        <begin position="1"/>
        <end position="253"/>
    </location>
</feature>
<feature type="active site" description="Proton acceptor" evidence="2">
    <location>
        <position position="63"/>
    </location>
</feature>
<feature type="binding site" evidence="1">
    <location>
        <begin position="115"/>
        <end position="119"/>
    </location>
    <ligand>
        <name>NADP(+)</name>
        <dbReference type="ChEBI" id="CHEBI:58349"/>
    </ligand>
</feature>
<dbReference type="EC" id="1.1.1.25"/>
<dbReference type="EMBL" id="CP000969">
    <property type="protein sequence ID" value="ACB08942.1"/>
    <property type="molecule type" value="Genomic_DNA"/>
</dbReference>
<dbReference type="RefSeq" id="WP_011943195.1">
    <property type="nucleotide sequence ID" value="NC_010483.1"/>
</dbReference>
<dbReference type="SMR" id="B1L9E4"/>
<dbReference type="KEGG" id="trq:TRQ2_0589"/>
<dbReference type="HOGENOM" id="CLU_044063_4_1_0"/>
<dbReference type="UniPathway" id="UPA00053">
    <property type="reaction ID" value="UER00087"/>
</dbReference>
<dbReference type="Proteomes" id="UP000001687">
    <property type="component" value="Chromosome"/>
</dbReference>
<dbReference type="GO" id="GO:0005829">
    <property type="term" value="C:cytosol"/>
    <property type="evidence" value="ECO:0007669"/>
    <property type="project" value="TreeGrafter"/>
</dbReference>
<dbReference type="GO" id="GO:0050661">
    <property type="term" value="F:NADP binding"/>
    <property type="evidence" value="ECO:0007669"/>
    <property type="project" value="TreeGrafter"/>
</dbReference>
<dbReference type="GO" id="GO:0004764">
    <property type="term" value="F:shikimate 3-dehydrogenase (NADP+) activity"/>
    <property type="evidence" value="ECO:0007669"/>
    <property type="project" value="UniProtKB-UniRule"/>
</dbReference>
<dbReference type="GO" id="GO:0008652">
    <property type="term" value="P:amino acid biosynthetic process"/>
    <property type="evidence" value="ECO:0007669"/>
    <property type="project" value="UniProtKB-KW"/>
</dbReference>
<dbReference type="GO" id="GO:0009073">
    <property type="term" value="P:aromatic amino acid family biosynthetic process"/>
    <property type="evidence" value="ECO:0007669"/>
    <property type="project" value="UniProtKB-KW"/>
</dbReference>
<dbReference type="GO" id="GO:0009423">
    <property type="term" value="P:chorismate biosynthetic process"/>
    <property type="evidence" value="ECO:0007669"/>
    <property type="project" value="UniProtKB-UniRule"/>
</dbReference>
<dbReference type="GO" id="GO:0019632">
    <property type="term" value="P:shikimate metabolic process"/>
    <property type="evidence" value="ECO:0007669"/>
    <property type="project" value="TreeGrafter"/>
</dbReference>
<dbReference type="CDD" id="cd01065">
    <property type="entry name" value="NAD_bind_Shikimate_DH"/>
    <property type="match status" value="1"/>
</dbReference>
<dbReference type="Gene3D" id="3.40.50.10860">
    <property type="entry name" value="Leucine Dehydrogenase, chain A, domain 1"/>
    <property type="match status" value="1"/>
</dbReference>
<dbReference type="Gene3D" id="3.40.50.720">
    <property type="entry name" value="NAD(P)-binding Rossmann-like Domain"/>
    <property type="match status" value="1"/>
</dbReference>
<dbReference type="InterPro" id="IPR046346">
    <property type="entry name" value="Aminoacid_DH-like_N_sf"/>
</dbReference>
<dbReference type="InterPro" id="IPR036291">
    <property type="entry name" value="NAD(P)-bd_dom_sf"/>
</dbReference>
<dbReference type="InterPro" id="IPR013708">
    <property type="entry name" value="Shikimate_DH-bd_N"/>
</dbReference>
<dbReference type="InterPro" id="IPR022893">
    <property type="entry name" value="Shikimate_DH_fam"/>
</dbReference>
<dbReference type="InterPro" id="IPR006151">
    <property type="entry name" value="Shikm_DH/Glu-tRNA_Rdtase"/>
</dbReference>
<dbReference type="PANTHER" id="PTHR21089:SF1">
    <property type="entry name" value="BIFUNCTIONAL 3-DEHYDROQUINATE DEHYDRATASE_SHIKIMATE DEHYDROGENASE, CHLOROPLASTIC"/>
    <property type="match status" value="1"/>
</dbReference>
<dbReference type="PANTHER" id="PTHR21089">
    <property type="entry name" value="SHIKIMATE DEHYDROGENASE"/>
    <property type="match status" value="1"/>
</dbReference>
<dbReference type="Pfam" id="PF01488">
    <property type="entry name" value="Shikimate_DH"/>
    <property type="match status" value="1"/>
</dbReference>
<dbReference type="Pfam" id="PF08501">
    <property type="entry name" value="Shikimate_dh_N"/>
    <property type="match status" value="1"/>
</dbReference>
<dbReference type="SUPFAM" id="SSF53223">
    <property type="entry name" value="Aminoacid dehydrogenase-like, N-terminal domain"/>
    <property type="match status" value="1"/>
</dbReference>
<dbReference type="SUPFAM" id="SSF51735">
    <property type="entry name" value="NAD(P)-binding Rossmann-fold domains"/>
    <property type="match status" value="1"/>
</dbReference>
<name>AROE_THESQ</name>